<accession>B5F4N9</accession>
<organism>
    <name type="scientific">Salmonella agona (strain SL483)</name>
    <dbReference type="NCBI Taxonomy" id="454166"/>
    <lineage>
        <taxon>Bacteria</taxon>
        <taxon>Pseudomonadati</taxon>
        <taxon>Pseudomonadota</taxon>
        <taxon>Gammaproteobacteria</taxon>
        <taxon>Enterobacterales</taxon>
        <taxon>Enterobacteriaceae</taxon>
        <taxon>Salmonella</taxon>
    </lineage>
</organism>
<keyword id="KW-0963">Cytoplasm</keyword>
<keyword id="KW-0324">Glycolysis</keyword>
<keyword id="KW-0456">Lyase</keyword>
<keyword id="KW-0460">Magnesium</keyword>
<keyword id="KW-0479">Metal-binding</keyword>
<keyword id="KW-0964">Secreted</keyword>
<reference key="1">
    <citation type="journal article" date="2011" name="J. Bacteriol.">
        <title>Comparative genomics of 28 Salmonella enterica isolates: evidence for CRISPR-mediated adaptive sublineage evolution.</title>
        <authorList>
            <person name="Fricke W.F."/>
            <person name="Mammel M.K."/>
            <person name="McDermott P.F."/>
            <person name="Tartera C."/>
            <person name="White D.G."/>
            <person name="Leclerc J.E."/>
            <person name="Ravel J."/>
            <person name="Cebula T.A."/>
        </authorList>
    </citation>
    <scope>NUCLEOTIDE SEQUENCE [LARGE SCALE GENOMIC DNA]</scope>
    <source>
        <strain>SL483</strain>
    </source>
</reference>
<gene>
    <name evidence="1" type="primary">eno</name>
    <name type="ordered locus">SeAg_B3085</name>
</gene>
<name>ENO_SALA4</name>
<sequence length="432" mass="45599">MSKIVKVIGREIIDSRGNPTVEAEVHLEGGFVGMAAAPSGASTGSREALELRDGDKSRFLGKGVTKAVGAVNGPIAQAILGKDAKDQAGIDKIMIDLDGTENKSNFGANAILAVSLANAKAAAAAKGMPLYEHIAELNGTPGKYSMPVPMMNIINGGEHADNNVDIQEFMIQPVGAKTVKEAIRMGSEVFHHLAKVLKGKGMNTAVGDEGGYAPNLGSNAEALAVIAEAVKAAGYELGKDITLAMDCAASEFYKDGKYVLAGEGNKAFTSEEFTHFLEELTKQYPIVSIEDGLDESDWDGFAYQTKVLGDKIQLVGDDLFVTNTKILKEGIEKGIANSILIKFNQIGSLTETLAAIKMAKDAGYTAVISHRSGETEDATIADLAVGTAAGQIKTGSMSRSDRVAKYNQLIRIEEALGEKAPYNGRKEIKGQA</sequence>
<protein>
    <recommendedName>
        <fullName evidence="1">Enolase</fullName>
        <ecNumber evidence="1">4.2.1.11</ecNumber>
    </recommendedName>
    <alternativeName>
        <fullName evidence="1">2-phospho-D-glycerate hydro-lyase</fullName>
    </alternativeName>
    <alternativeName>
        <fullName evidence="1">2-phosphoglycerate dehydratase</fullName>
    </alternativeName>
</protein>
<dbReference type="EC" id="4.2.1.11" evidence="1"/>
<dbReference type="EMBL" id="CP001138">
    <property type="protein sequence ID" value="ACH51501.1"/>
    <property type="molecule type" value="Genomic_DNA"/>
</dbReference>
<dbReference type="RefSeq" id="WP_000036734.1">
    <property type="nucleotide sequence ID" value="NC_011149.1"/>
</dbReference>
<dbReference type="SMR" id="B5F4N9"/>
<dbReference type="GeneID" id="66757270"/>
<dbReference type="KEGG" id="sea:SeAg_B3085"/>
<dbReference type="HOGENOM" id="CLU_031223_2_1_6"/>
<dbReference type="UniPathway" id="UPA00109">
    <property type="reaction ID" value="UER00187"/>
</dbReference>
<dbReference type="Proteomes" id="UP000008819">
    <property type="component" value="Chromosome"/>
</dbReference>
<dbReference type="GO" id="GO:0009986">
    <property type="term" value="C:cell surface"/>
    <property type="evidence" value="ECO:0007669"/>
    <property type="project" value="UniProtKB-SubCell"/>
</dbReference>
<dbReference type="GO" id="GO:0005576">
    <property type="term" value="C:extracellular region"/>
    <property type="evidence" value="ECO:0007669"/>
    <property type="project" value="UniProtKB-SubCell"/>
</dbReference>
<dbReference type="GO" id="GO:0000015">
    <property type="term" value="C:phosphopyruvate hydratase complex"/>
    <property type="evidence" value="ECO:0007669"/>
    <property type="project" value="InterPro"/>
</dbReference>
<dbReference type="GO" id="GO:0000287">
    <property type="term" value="F:magnesium ion binding"/>
    <property type="evidence" value="ECO:0007669"/>
    <property type="project" value="UniProtKB-UniRule"/>
</dbReference>
<dbReference type="GO" id="GO:0004634">
    <property type="term" value="F:phosphopyruvate hydratase activity"/>
    <property type="evidence" value="ECO:0007669"/>
    <property type="project" value="UniProtKB-UniRule"/>
</dbReference>
<dbReference type="GO" id="GO:0006096">
    <property type="term" value="P:glycolytic process"/>
    <property type="evidence" value="ECO:0007669"/>
    <property type="project" value="UniProtKB-UniRule"/>
</dbReference>
<dbReference type="CDD" id="cd03313">
    <property type="entry name" value="enolase"/>
    <property type="match status" value="1"/>
</dbReference>
<dbReference type="FunFam" id="3.20.20.120:FF:000001">
    <property type="entry name" value="Enolase"/>
    <property type="match status" value="1"/>
</dbReference>
<dbReference type="FunFam" id="3.30.390.10:FF:000001">
    <property type="entry name" value="Enolase"/>
    <property type="match status" value="1"/>
</dbReference>
<dbReference type="Gene3D" id="3.20.20.120">
    <property type="entry name" value="Enolase-like C-terminal domain"/>
    <property type="match status" value="1"/>
</dbReference>
<dbReference type="Gene3D" id="3.30.390.10">
    <property type="entry name" value="Enolase-like, N-terminal domain"/>
    <property type="match status" value="1"/>
</dbReference>
<dbReference type="HAMAP" id="MF_00318">
    <property type="entry name" value="Enolase"/>
    <property type="match status" value="1"/>
</dbReference>
<dbReference type="InterPro" id="IPR000941">
    <property type="entry name" value="Enolase"/>
</dbReference>
<dbReference type="InterPro" id="IPR036849">
    <property type="entry name" value="Enolase-like_C_sf"/>
</dbReference>
<dbReference type="InterPro" id="IPR029017">
    <property type="entry name" value="Enolase-like_N"/>
</dbReference>
<dbReference type="InterPro" id="IPR020810">
    <property type="entry name" value="Enolase_C"/>
</dbReference>
<dbReference type="InterPro" id="IPR020809">
    <property type="entry name" value="Enolase_CS"/>
</dbReference>
<dbReference type="InterPro" id="IPR020811">
    <property type="entry name" value="Enolase_N"/>
</dbReference>
<dbReference type="NCBIfam" id="TIGR01060">
    <property type="entry name" value="eno"/>
    <property type="match status" value="1"/>
</dbReference>
<dbReference type="PANTHER" id="PTHR11902">
    <property type="entry name" value="ENOLASE"/>
    <property type="match status" value="1"/>
</dbReference>
<dbReference type="PANTHER" id="PTHR11902:SF1">
    <property type="entry name" value="ENOLASE"/>
    <property type="match status" value="1"/>
</dbReference>
<dbReference type="Pfam" id="PF00113">
    <property type="entry name" value="Enolase_C"/>
    <property type="match status" value="1"/>
</dbReference>
<dbReference type="Pfam" id="PF03952">
    <property type="entry name" value="Enolase_N"/>
    <property type="match status" value="1"/>
</dbReference>
<dbReference type="PIRSF" id="PIRSF001400">
    <property type="entry name" value="Enolase"/>
    <property type="match status" value="1"/>
</dbReference>
<dbReference type="PRINTS" id="PR00148">
    <property type="entry name" value="ENOLASE"/>
</dbReference>
<dbReference type="SFLD" id="SFLDF00002">
    <property type="entry name" value="enolase"/>
    <property type="match status" value="1"/>
</dbReference>
<dbReference type="SFLD" id="SFLDG00178">
    <property type="entry name" value="enolase"/>
    <property type="match status" value="1"/>
</dbReference>
<dbReference type="SMART" id="SM01192">
    <property type="entry name" value="Enolase_C"/>
    <property type="match status" value="1"/>
</dbReference>
<dbReference type="SMART" id="SM01193">
    <property type="entry name" value="Enolase_N"/>
    <property type="match status" value="1"/>
</dbReference>
<dbReference type="SUPFAM" id="SSF51604">
    <property type="entry name" value="Enolase C-terminal domain-like"/>
    <property type="match status" value="1"/>
</dbReference>
<dbReference type="SUPFAM" id="SSF54826">
    <property type="entry name" value="Enolase N-terminal domain-like"/>
    <property type="match status" value="1"/>
</dbReference>
<dbReference type="PROSITE" id="PS00164">
    <property type="entry name" value="ENOLASE"/>
    <property type="match status" value="1"/>
</dbReference>
<feature type="chain" id="PRO_1000115906" description="Enolase">
    <location>
        <begin position="1"/>
        <end position="432"/>
    </location>
</feature>
<feature type="active site" description="Proton donor" evidence="1">
    <location>
        <position position="209"/>
    </location>
</feature>
<feature type="active site" description="Proton acceptor" evidence="1">
    <location>
        <position position="342"/>
    </location>
</feature>
<feature type="binding site" evidence="1">
    <location>
        <position position="167"/>
    </location>
    <ligand>
        <name>(2R)-2-phosphoglycerate</name>
        <dbReference type="ChEBI" id="CHEBI:58289"/>
    </ligand>
</feature>
<feature type="binding site" evidence="1">
    <location>
        <position position="246"/>
    </location>
    <ligand>
        <name>Mg(2+)</name>
        <dbReference type="ChEBI" id="CHEBI:18420"/>
    </ligand>
</feature>
<feature type="binding site" evidence="1">
    <location>
        <position position="290"/>
    </location>
    <ligand>
        <name>Mg(2+)</name>
        <dbReference type="ChEBI" id="CHEBI:18420"/>
    </ligand>
</feature>
<feature type="binding site" evidence="1">
    <location>
        <position position="317"/>
    </location>
    <ligand>
        <name>Mg(2+)</name>
        <dbReference type="ChEBI" id="CHEBI:18420"/>
    </ligand>
</feature>
<feature type="binding site" evidence="1">
    <location>
        <position position="342"/>
    </location>
    <ligand>
        <name>(2R)-2-phosphoglycerate</name>
        <dbReference type="ChEBI" id="CHEBI:58289"/>
    </ligand>
</feature>
<feature type="binding site" evidence="1">
    <location>
        <position position="371"/>
    </location>
    <ligand>
        <name>(2R)-2-phosphoglycerate</name>
        <dbReference type="ChEBI" id="CHEBI:58289"/>
    </ligand>
</feature>
<feature type="binding site" evidence="1">
    <location>
        <position position="372"/>
    </location>
    <ligand>
        <name>(2R)-2-phosphoglycerate</name>
        <dbReference type="ChEBI" id="CHEBI:58289"/>
    </ligand>
</feature>
<feature type="binding site" evidence="1">
    <location>
        <position position="393"/>
    </location>
    <ligand>
        <name>(2R)-2-phosphoglycerate</name>
        <dbReference type="ChEBI" id="CHEBI:58289"/>
    </ligand>
</feature>
<evidence type="ECO:0000255" key="1">
    <source>
        <dbReference type="HAMAP-Rule" id="MF_00318"/>
    </source>
</evidence>
<comment type="function">
    <text evidence="1">Catalyzes the reversible conversion of 2-phosphoglycerate (2-PG) into phosphoenolpyruvate (PEP). It is essential for the degradation of carbohydrates via glycolysis.</text>
</comment>
<comment type="catalytic activity">
    <reaction evidence="1">
        <text>(2R)-2-phosphoglycerate = phosphoenolpyruvate + H2O</text>
        <dbReference type="Rhea" id="RHEA:10164"/>
        <dbReference type="ChEBI" id="CHEBI:15377"/>
        <dbReference type="ChEBI" id="CHEBI:58289"/>
        <dbReference type="ChEBI" id="CHEBI:58702"/>
        <dbReference type="EC" id="4.2.1.11"/>
    </reaction>
</comment>
<comment type="cofactor">
    <cofactor evidence="1">
        <name>Mg(2+)</name>
        <dbReference type="ChEBI" id="CHEBI:18420"/>
    </cofactor>
    <text evidence="1">Binds a second Mg(2+) ion via substrate during catalysis.</text>
</comment>
<comment type="pathway">
    <text evidence="1">Carbohydrate degradation; glycolysis; pyruvate from D-glyceraldehyde 3-phosphate: step 4/5.</text>
</comment>
<comment type="subunit">
    <text evidence="1">Component of the RNA degradosome, a multiprotein complex involved in RNA processing and mRNA degradation.</text>
</comment>
<comment type="subcellular location">
    <subcellularLocation>
        <location evidence="1">Cytoplasm</location>
    </subcellularLocation>
    <subcellularLocation>
        <location evidence="1">Secreted</location>
    </subcellularLocation>
    <subcellularLocation>
        <location evidence="1">Cell surface</location>
    </subcellularLocation>
    <text evidence="1">Fractions of enolase are present in both the cytoplasm and on the cell surface.</text>
</comment>
<comment type="similarity">
    <text evidence="1">Belongs to the enolase family.</text>
</comment>
<proteinExistence type="inferred from homology"/>